<organism>
    <name type="scientific">Sus scrofa</name>
    <name type="common">Pig</name>
    <dbReference type="NCBI Taxonomy" id="9823"/>
    <lineage>
        <taxon>Eukaryota</taxon>
        <taxon>Metazoa</taxon>
        <taxon>Chordata</taxon>
        <taxon>Craniata</taxon>
        <taxon>Vertebrata</taxon>
        <taxon>Euteleostomi</taxon>
        <taxon>Mammalia</taxon>
        <taxon>Eutheria</taxon>
        <taxon>Laurasiatheria</taxon>
        <taxon>Artiodactyla</taxon>
        <taxon>Suina</taxon>
        <taxon>Suidae</taxon>
        <taxon>Sus</taxon>
    </lineage>
</organism>
<proteinExistence type="evidence at transcript level"/>
<protein>
    <recommendedName>
        <fullName>Erythropoietin</fullName>
    </recommendedName>
</protein>
<keyword id="KW-1015">Disulfide bond</keyword>
<keyword id="KW-0265">Erythrocyte maturation</keyword>
<keyword id="KW-0325">Glycoprotein</keyword>
<keyword id="KW-0372">Hormone</keyword>
<keyword id="KW-1185">Reference proteome</keyword>
<keyword id="KW-0964">Secreted</keyword>
<keyword id="KW-0732">Signal</keyword>
<name>EPO_PIG</name>
<feature type="signal peptide" evidence="3">
    <location>
        <begin position="1"/>
        <end position="26"/>
    </location>
</feature>
<feature type="chain" id="PRO_0000008406" description="Erythropoietin">
    <location>
        <begin position="27"/>
        <end position="194"/>
    </location>
</feature>
<feature type="glycosylation site" description="N-linked (GlcNAc...) asparagine" evidence="3">
    <location>
        <position position="50"/>
    </location>
</feature>
<feature type="glycosylation site" description="N-linked (GlcNAc...) asparagine" evidence="3">
    <location>
        <position position="64"/>
    </location>
</feature>
<feature type="glycosylation site" description="N-linked (GlcNAc...) asparagine" evidence="3">
    <location>
        <position position="109"/>
    </location>
</feature>
<feature type="glycosylation site" description="N-linked (GlcNAc...) asparagine" evidence="3">
    <location>
        <position position="172"/>
    </location>
</feature>
<feature type="disulfide bond" evidence="1">
    <location>
        <begin position="33"/>
        <end position="189"/>
    </location>
</feature>
<feature type="disulfide bond" evidence="1">
    <location>
        <begin position="55"/>
        <end position="59"/>
    </location>
</feature>
<dbReference type="EMBL" id="AJ249745">
    <property type="protein sequence ID" value="CAB96416.1"/>
    <property type="molecule type" value="mRNA"/>
</dbReference>
<dbReference type="EMBL" id="AJ249746">
    <property type="protein sequence ID" value="CAB96417.1"/>
    <property type="molecule type" value="Genomic_DNA"/>
</dbReference>
<dbReference type="EMBL" id="L10607">
    <property type="protein sequence ID" value="AAA31029.1"/>
    <property type="molecule type" value="mRNA"/>
</dbReference>
<dbReference type="PIR" id="I46578">
    <property type="entry name" value="I46578"/>
</dbReference>
<dbReference type="RefSeq" id="NP_999299.1">
    <property type="nucleotide sequence ID" value="NM_214134.1"/>
</dbReference>
<dbReference type="SMR" id="P49157"/>
<dbReference type="FunCoup" id="P49157">
    <property type="interactions" value="161"/>
</dbReference>
<dbReference type="STRING" id="9823.ENSSSCP00000008194"/>
<dbReference type="GlyCosmos" id="P49157">
    <property type="glycosylation" value="4 sites, No reported glycans"/>
</dbReference>
<dbReference type="GlyGen" id="P49157">
    <property type="glycosylation" value="4 sites"/>
</dbReference>
<dbReference type="PaxDb" id="9823-ENSSSCP00000008194"/>
<dbReference type="Ensembl" id="ENSSSCT00000008413.2">
    <property type="protein sequence ID" value="ENSSSCP00000008194.1"/>
    <property type="gene ID" value="ENSSSCG00000007673.2"/>
</dbReference>
<dbReference type="Ensembl" id="ENSSSCT00025100933.1">
    <property type="protein sequence ID" value="ENSSSCP00025044599.1"/>
    <property type="gene ID" value="ENSSSCG00025073331.1"/>
</dbReference>
<dbReference type="Ensembl" id="ENSSSCT00030013330.1">
    <property type="protein sequence ID" value="ENSSSCP00030005994.1"/>
    <property type="gene ID" value="ENSSSCG00030009733.1"/>
</dbReference>
<dbReference type="Ensembl" id="ENSSSCT00035097698.1">
    <property type="protein sequence ID" value="ENSSSCP00035041231.1"/>
    <property type="gene ID" value="ENSSSCG00035072206.1"/>
</dbReference>
<dbReference type="Ensembl" id="ENSSSCT00040103619.1">
    <property type="protein sequence ID" value="ENSSSCP00040047022.1"/>
    <property type="gene ID" value="ENSSSCG00040074856.1"/>
</dbReference>
<dbReference type="Ensembl" id="ENSSSCT00045031528.1">
    <property type="protein sequence ID" value="ENSSSCP00045021842.1"/>
    <property type="gene ID" value="ENSSSCG00045018517.1"/>
</dbReference>
<dbReference type="Ensembl" id="ENSSSCT00055050476.1">
    <property type="protein sequence ID" value="ENSSSCP00055040356.1"/>
    <property type="gene ID" value="ENSSSCG00055025537.1"/>
</dbReference>
<dbReference type="Ensembl" id="ENSSSCT00065019511.1">
    <property type="protein sequence ID" value="ENSSSCP00065007977.1"/>
    <property type="gene ID" value="ENSSSCG00065014655.1"/>
</dbReference>
<dbReference type="Ensembl" id="ENSSSCT00070032133.1">
    <property type="protein sequence ID" value="ENSSSCP00070026806.1"/>
    <property type="gene ID" value="ENSSSCG00070016325.1"/>
</dbReference>
<dbReference type="Ensembl" id="ENSSSCT00090024313">
    <property type="protein sequence ID" value="ENSSSCP00090015064"/>
    <property type="gene ID" value="ENSSSCG00090013860"/>
</dbReference>
<dbReference type="Ensembl" id="ENSSSCT00105031630">
    <property type="protein sequence ID" value="ENSSSCP00105022180"/>
    <property type="gene ID" value="ENSSSCG00105016411"/>
</dbReference>
<dbReference type="Ensembl" id="ENSSSCT00110057172">
    <property type="protein sequence ID" value="ENSSSCP00110039761"/>
    <property type="gene ID" value="ENSSSCG00110029922"/>
</dbReference>
<dbReference type="Ensembl" id="ENSSSCT00115022315">
    <property type="protein sequence ID" value="ENSSSCP00115021144"/>
    <property type="gene ID" value="ENSSSCG00115012918"/>
</dbReference>
<dbReference type="GeneID" id="397249"/>
<dbReference type="KEGG" id="ssc:397249"/>
<dbReference type="CTD" id="2056"/>
<dbReference type="VGNC" id="VGNC:87744">
    <property type="gene designation" value="EPO"/>
</dbReference>
<dbReference type="eggNOG" id="ENOG502RXRC">
    <property type="taxonomic scope" value="Eukaryota"/>
</dbReference>
<dbReference type="GeneTree" id="ENSGT00390000017226"/>
<dbReference type="HOGENOM" id="CLU_110946_0_0_1"/>
<dbReference type="InParanoid" id="P49157"/>
<dbReference type="OMA" id="AMEFPRL"/>
<dbReference type="OrthoDB" id="9892121at2759"/>
<dbReference type="TreeFam" id="TF333413"/>
<dbReference type="Reactome" id="R-SSC-9027276">
    <property type="pathway name" value="Erythropoietin activates Phosphoinositide-3-kinase (PI3K)"/>
</dbReference>
<dbReference type="Reactome" id="R-SSC-9027284">
    <property type="pathway name" value="Erythropoietin activates RAS"/>
</dbReference>
<dbReference type="Proteomes" id="UP000008227">
    <property type="component" value="Chromosome 3"/>
</dbReference>
<dbReference type="Proteomes" id="UP000314985">
    <property type="component" value="Chromosome 3"/>
</dbReference>
<dbReference type="Proteomes" id="UP000694570">
    <property type="component" value="Unplaced"/>
</dbReference>
<dbReference type="Proteomes" id="UP000694571">
    <property type="component" value="Unplaced"/>
</dbReference>
<dbReference type="Proteomes" id="UP000694720">
    <property type="component" value="Unplaced"/>
</dbReference>
<dbReference type="Proteomes" id="UP000694722">
    <property type="component" value="Unplaced"/>
</dbReference>
<dbReference type="Proteomes" id="UP000694723">
    <property type="component" value="Unplaced"/>
</dbReference>
<dbReference type="Proteomes" id="UP000694724">
    <property type="component" value="Unplaced"/>
</dbReference>
<dbReference type="Proteomes" id="UP000694725">
    <property type="component" value="Unplaced"/>
</dbReference>
<dbReference type="Proteomes" id="UP000694726">
    <property type="component" value="Unplaced"/>
</dbReference>
<dbReference type="Proteomes" id="UP000694727">
    <property type="component" value="Unplaced"/>
</dbReference>
<dbReference type="Proteomes" id="UP000694728">
    <property type="component" value="Unplaced"/>
</dbReference>
<dbReference type="Bgee" id="ENSSSCG00000007673">
    <property type="expression patterns" value="Expressed in limb bud and 1 other cell type or tissue"/>
</dbReference>
<dbReference type="GO" id="GO:0009986">
    <property type="term" value="C:cell surface"/>
    <property type="evidence" value="ECO:0007669"/>
    <property type="project" value="Ensembl"/>
</dbReference>
<dbReference type="GO" id="GO:0005615">
    <property type="term" value="C:extracellular space"/>
    <property type="evidence" value="ECO:0000318"/>
    <property type="project" value="GO_Central"/>
</dbReference>
<dbReference type="GO" id="GO:0005125">
    <property type="term" value="F:cytokine activity"/>
    <property type="evidence" value="ECO:0000318"/>
    <property type="project" value="GO_Central"/>
</dbReference>
<dbReference type="GO" id="GO:0005128">
    <property type="term" value="F:erythropoietin receptor binding"/>
    <property type="evidence" value="ECO:0000250"/>
    <property type="project" value="UniProtKB"/>
</dbReference>
<dbReference type="GO" id="GO:0005179">
    <property type="term" value="F:hormone activity"/>
    <property type="evidence" value="ECO:0007669"/>
    <property type="project" value="UniProtKB-KW"/>
</dbReference>
<dbReference type="GO" id="GO:0030295">
    <property type="term" value="F:protein kinase activator activity"/>
    <property type="evidence" value="ECO:0000318"/>
    <property type="project" value="GO_Central"/>
</dbReference>
<dbReference type="GO" id="GO:0097696">
    <property type="term" value="P:cell surface receptor signaling pathway via STAT"/>
    <property type="evidence" value="ECO:0007669"/>
    <property type="project" value="Ensembl"/>
</dbReference>
<dbReference type="GO" id="GO:0071474">
    <property type="term" value="P:cellular hyperosmotic response"/>
    <property type="evidence" value="ECO:0007669"/>
    <property type="project" value="Ensembl"/>
</dbReference>
<dbReference type="GO" id="GO:0007566">
    <property type="term" value="P:embryo implantation"/>
    <property type="evidence" value="ECO:0007669"/>
    <property type="project" value="Ensembl"/>
</dbReference>
<dbReference type="GO" id="GO:0030218">
    <property type="term" value="P:erythrocyte differentiation"/>
    <property type="evidence" value="ECO:0000250"/>
    <property type="project" value="UniProtKB"/>
</dbReference>
<dbReference type="GO" id="GO:0043249">
    <property type="term" value="P:erythrocyte maturation"/>
    <property type="evidence" value="ECO:0007669"/>
    <property type="project" value="UniProtKB-KW"/>
</dbReference>
<dbReference type="GO" id="GO:0038162">
    <property type="term" value="P:erythropoietin-mediated signaling pathway"/>
    <property type="evidence" value="ECO:0000250"/>
    <property type="project" value="UniProtKB"/>
</dbReference>
<dbReference type="GO" id="GO:0042541">
    <property type="term" value="P:hemoglobin biosynthetic process"/>
    <property type="evidence" value="ECO:0007669"/>
    <property type="project" value="Ensembl"/>
</dbReference>
<dbReference type="GO" id="GO:0033028">
    <property type="term" value="P:myeloid cell apoptotic process"/>
    <property type="evidence" value="ECO:0007669"/>
    <property type="project" value="Ensembl"/>
</dbReference>
<dbReference type="GO" id="GO:0010523">
    <property type="term" value="P:negative regulation of calcium ion transport into cytosol"/>
    <property type="evidence" value="ECO:0007669"/>
    <property type="project" value="Ensembl"/>
</dbReference>
<dbReference type="GO" id="GO:1902251">
    <property type="term" value="P:negative regulation of erythrocyte apoptotic process"/>
    <property type="evidence" value="ECO:0007669"/>
    <property type="project" value="Ensembl"/>
</dbReference>
<dbReference type="GO" id="GO:1902219">
    <property type="term" value="P:negative regulation of intrinsic apoptotic signaling pathway in response to osmotic stress"/>
    <property type="evidence" value="ECO:0007669"/>
    <property type="project" value="Ensembl"/>
</dbReference>
<dbReference type="GO" id="GO:0000122">
    <property type="term" value="P:negative regulation of transcription by RNA polymerase II"/>
    <property type="evidence" value="ECO:0007669"/>
    <property type="project" value="Ensembl"/>
</dbReference>
<dbReference type="GO" id="GO:0008284">
    <property type="term" value="P:positive regulation of cell population proliferation"/>
    <property type="evidence" value="ECO:0000318"/>
    <property type="project" value="GO_Central"/>
</dbReference>
<dbReference type="GO" id="GO:0045893">
    <property type="term" value="P:positive regulation of DNA-templated transcription"/>
    <property type="evidence" value="ECO:0007669"/>
    <property type="project" value="Ensembl"/>
</dbReference>
<dbReference type="GO" id="GO:0046579">
    <property type="term" value="P:positive regulation of Ras protein signal transduction"/>
    <property type="evidence" value="ECO:0000318"/>
    <property type="project" value="GO_Central"/>
</dbReference>
<dbReference type="GO" id="GO:0001666">
    <property type="term" value="P:response to hypoxia"/>
    <property type="evidence" value="ECO:0007669"/>
    <property type="project" value="Ensembl"/>
</dbReference>
<dbReference type="FunFam" id="1.20.1250.10:FF:000013">
    <property type="entry name" value="Erythropoietin"/>
    <property type="match status" value="1"/>
</dbReference>
<dbReference type="Gene3D" id="1.20.1250.10">
    <property type="match status" value="1"/>
</dbReference>
<dbReference type="InterPro" id="IPR009079">
    <property type="entry name" value="4_helix_cytokine-like_core"/>
</dbReference>
<dbReference type="InterPro" id="IPR019767">
    <property type="entry name" value="EPO/TPO_CS"/>
</dbReference>
<dbReference type="InterPro" id="IPR001323">
    <property type="entry name" value="EPO_TPO"/>
</dbReference>
<dbReference type="InterPro" id="IPR003013">
    <property type="entry name" value="Erythroptn"/>
</dbReference>
<dbReference type="PANTHER" id="PTHR10370">
    <property type="entry name" value="ERYTHROPOIETIN"/>
    <property type="match status" value="1"/>
</dbReference>
<dbReference type="PANTHER" id="PTHR10370:SF0">
    <property type="entry name" value="ERYTHROPOIETIN"/>
    <property type="match status" value="1"/>
</dbReference>
<dbReference type="Pfam" id="PF00758">
    <property type="entry name" value="EPO_TPO"/>
    <property type="match status" value="1"/>
</dbReference>
<dbReference type="PIRSF" id="PIRSF001951">
    <property type="entry name" value="EPO"/>
    <property type="match status" value="1"/>
</dbReference>
<dbReference type="PRINTS" id="PR00272">
    <property type="entry name" value="ERYTHROPTN"/>
</dbReference>
<dbReference type="SUPFAM" id="SSF47266">
    <property type="entry name" value="4-helical cytokines"/>
    <property type="match status" value="1"/>
</dbReference>
<dbReference type="PROSITE" id="PS00817">
    <property type="entry name" value="EPO_TPO"/>
    <property type="match status" value="1"/>
</dbReference>
<sequence>MGARECPARLLLLSLLLLPLGLPVLGAPPRLICDSRVLERYILEAKEGENATMGCAESCSFSENITVPDTKVNFYAWKRMEVQQQAMEVWQGLALLSEAILQGQALLANSSQPSEALQLHVDKAVSGLRSLTSLLRALGAQKEAIPLPDASPSSATPLRTFAVDTLCKLFRNYSNFLRGKLTLYTGEACRRRDR</sequence>
<evidence type="ECO:0000250" key="1"/>
<evidence type="ECO:0000250" key="2">
    <source>
        <dbReference type="UniProtKB" id="P01588"/>
    </source>
</evidence>
<evidence type="ECO:0000255" key="3"/>
<evidence type="ECO:0000305" key="4"/>
<reference key="1">
    <citation type="journal article" date="2001" name="Domest. Anim. Endocrinol.">
        <title>The porcine erythropoietin gene: cDNA sequence, genomic sequence and expression analyses in piglets.</title>
        <authorList>
            <person name="David R.B."/>
            <person name="Blom A.K."/>
            <person name="Sjaastad O.V."/>
            <person name="Harbitz I."/>
        </authorList>
    </citation>
    <scope>NUCLEOTIDE SEQUENCE [GENOMIC DNA / MRNA]</scope>
    <source>
        <strain>Norwegian Landrace</strain>
        <tissue>Kidney</tissue>
    </source>
</reference>
<reference key="2">
    <citation type="journal article" date="1993" name="Blood">
        <title>Erythropoietin structure-function relationships: high degree of sequence homology among mammals.</title>
        <authorList>
            <person name="Wen D."/>
            <person name="Boissel J.-P.R."/>
            <person name="Tracy T.E."/>
            <person name="Gruninger R.H."/>
            <person name="Mulcahy L.S."/>
            <person name="Czelusniak J."/>
            <person name="Goodman M."/>
            <person name="Bunn H.F."/>
        </authorList>
    </citation>
    <scope>NUCLEOTIDE SEQUENCE [MRNA] OF 5-194</scope>
    <source>
        <tissue>Kidney</tissue>
    </source>
</reference>
<gene>
    <name type="primary">EPO</name>
</gene>
<comment type="function">
    <text evidence="2">Hormone involved in the regulation of erythrocyte proliferation and differentiation and the maintenance of a physiological level of circulating erythrocyte mass. Binds to EPOR leading to EPOR dimerization and JAK2 activation thereby activating specific downstream effectors, including STAT1 and STAT3.</text>
</comment>
<comment type="subcellular location">
    <subcellularLocation>
        <location>Secreted</location>
    </subcellularLocation>
</comment>
<comment type="tissue specificity">
    <text>Produced by kidney or liver of adult mammals and by liver of fetal or neonatal mammals.</text>
</comment>
<comment type="similarity">
    <text evidence="4">Belongs to the EPO/TPO family.</text>
</comment>
<accession>P49157</accession>
<accession>Q9MYM8</accession>